<organism>
    <name type="scientific">Pseudomonas paraeruginosa (strain DSM 24068 / PA7)</name>
    <name type="common">Pseudomonas aeruginosa (strain PA7)</name>
    <dbReference type="NCBI Taxonomy" id="381754"/>
    <lineage>
        <taxon>Bacteria</taxon>
        <taxon>Pseudomonadati</taxon>
        <taxon>Pseudomonadota</taxon>
        <taxon>Gammaproteobacteria</taxon>
        <taxon>Pseudomonadales</taxon>
        <taxon>Pseudomonadaceae</taxon>
        <taxon>Pseudomonas</taxon>
        <taxon>Pseudomonas paraeruginosa</taxon>
    </lineage>
</organism>
<proteinExistence type="inferred from homology"/>
<gene>
    <name evidence="1" type="primary">rpsU</name>
    <name type="ordered locus">PSPA7_0722</name>
</gene>
<evidence type="ECO:0000255" key="1">
    <source>
        <dbReference type="HAMAP-Rule" id="MF_00358"/>
    </source>
</evidence>
<evidence type="ECO:0000256" key="2">
    <source>
        <dbReference type="SAM" id="MobiDB-lite"/>
    </source>
</evidence>
<evidence type="ECO:0000305" key="3"/>
<dbReference type="EMBL" id="CP000744">
    <property type="protein sequence ID" value="ABR82310.1"/>
    <property type="molecule type" value="Genomic_DNA"/>
</dbReference>
<dbReference type="RefSeq" id="WP_003085057.1">
    <property type="nucleotide sequence ID" value="NC_009656.1"/>
</dbReference>
<dbReference type="SMR" id="A6UZ82"/>
<dbReference type="GeneID" id="88187573"/>
<dbReference type="KEGG" id="pap:PSPA7_0722"/>
<dbReference type="HOGENOM" id="CLU_159258_1_0_6"/>
<dbReference type="Proteomes" id="UP000001582">
    <property type="component" value="Chromosome"/>
</dbReference>
<dbReference type="GO" id="GO:1990904">
    <property type="term" value="C:ribonucleoprotein complex"/>
    <property type="evidence" value="ECO:0007669"/>
    <property type="project" value="UniProtKB-KW"/>
</dbReference>
<dbReference type="GO" id="GO:0005840">
    <property type="term" value="C:ribosome"/>
    <property type="evidence" value="ECO:0007669"/>
    <property type="project" value="UniProtKB-KW"/>
</dbReference>
<dbReference type="GO" id="GO:0003735">
    <property type="term" value="F:structural constituent of ribosome"/>
    <property type="evidence" value="ECO:0007669"/>
    <property type="project" value="InterPro"/>
</dbReference>
<dbReference type="GO" id="GO:0006412">
    <property type="term" value="P:translation"/>
    <property type="evidence" value="ECO:0007669"/>
    <property type="project" value="UniProtKB-UniRule"/>
</dbReference>
<dbReference type="Gene3D" id="1.20.5.1150">
    <property type="entry name" value="Ribosomal protein S8"/>
    <property type="match status" value="1"/>
</dbReference>
<dbReference type="HAMAP" id="MF_00358">
    <property type="entry name" value="Ribosomal_bS21"/>
    <property type="match status" value="1"/>
</dbReference>
<dbReference type="InterPro" id="IPR001911">
    <property type="entry name" value="Ribosomal_bS21"/>
</dbReference>
<dbReference type="InterPro" id="IPR018278">
    <property type="entry name" value="Ribosomal_bS21_CS"/>
</dbReference>
<dbReference type="InterPro" id="IPR038380">
    <property type="entry name" value="Ribosomal_bS21_sf"/>
</dbReference>
<dbReference type="NCBIfam" id="TIGR00030">
    <property type="entry name" value="S21p"/>
    <property type="match status" value="1"/>
</dbReference>
<dbReference type="PANTHER" id="PTHR21109">
    <property type="entry name" value="MITOCHONDRIAL 28S RIBOSOMAL PROTEIN S21"/>
    <property type="match status" value="1"/>
</dbReference>
<dbReference type="PANTHER" id="PTHR21109:SF22">
    <property type="entry name" value="SMALL RIBOSOMAL SUBUNIT PROTEIN BS21"/>
    <property type="match status" value="1"/>
</dbReference>
<dbReference type="Pfam" id="PF01165">
    <property type="entry name" value="Ribosomal_S21"/>
    <property type="match status" value="1"/>
</dbReference>
<dbReference type="PRINTS" id="PR00976">
    <property type="entry name" value="RIBOSOMALS21"/>
</dbReference>
<dbReference type="PROSITE" id="PS01181">
    <property type="entry name" value="RIBOSOMAL_S21"/>
    <property type="match status" value="1"/>
</dbReference>
<comment type="similarity">
    <text evidence="1">Belongs to the bacterial ribosomal protein bS21 family.</text>
</comment>
<accession>A6UZ82</accession>
<feature type="chain" id="PRO_1000005154" description="Small ribosomal subunit protein bS21">
    <location>
        <begin position="1"/>
        <end position="71"/>
    </location>
</feature>
<feature type="region of interest" description="Disordered" evidence="2">
    <location>
        <begin position="48"/>
        <end position="71"/>
    </location>
</feature>
<feature type="compositionally biased region" description="Basic residues" evidence="2">
    <location>
        <begin position="48"/>
        <end position="59"/>
    </location>
</feature>
<feature type="compositionally biased region" description="Basic and acidic residues" evidence="2">
    <location>
        <begin position="60"/>
        <end position="71"/>
    </location>
</feature>
<keyword id="KW-0687">Ribonucleoprotein</keyword>
<keyword id="KW-0689">Ribosomal protein</keyword>
<protein>
    <recommendedName>
        <fullName evidence="1">Small ribosomal subunit protein bS21</fullName>
    </recommendedName>
    <alternativeName>
        <fullName evidence="3">30S ribosomal protein S21</fullName>
    </alternativeName>
</protein>
<name>RS21_PSEP7</name>
<sequence>MPAVKVKENEPFDVALRRFKRSCEKAGVLAEVRSREFYEKPTAERKRKAAAAVKRHAKKVQREQRRRERLY</sequence>
<reference key="1">
    <citation type="submission" date="2007-06" db="EMBL/GenBank/DDBJ databases">
        <authorList>
            <person name="Dodson R.J."/>
            <person name="Harkins D."/>
            <person name="Paulsen I.T."/>
        </authorList>
    </citation>
    <scope>NUCLEOTIDE SEQUENCE [LARGE SCALE GENOMIC DNA]</scope>
    <source>
        <strain>DSM 24068 / PA7</strain>
    </source>
</reference>